<organism>
    <name type="scientific">Staphylococcus aureus (strain Mu50 / ATCC 700699)</name>
    <dbReference type="NCBI Taxonomy" id="158878"/>
    <lineage>
        <taxon>Bacteria</taxon>
        <taxon>Bacillati</taxon>
        <taxon>Bacillota</taxon>
        <taxon>Bacilli</taxon>
        <taxon>Bacillales</taxon>
        <taxon>Staphylococcaceae</taxon>
        <taxon>Staphylococcus</taxon>
    </lineage>
</organism>
<protein>
    <recommendedName>
        <fullName>Probable transglycosylase IsaA</fullName>
        <ecNumber>3.2.-.-</ecNumber>
    </recommendedName>
    <alternativeName>
        <fullName>Immunodominant staphylococcal antigen A</fullName>
    </alternativeName>
</protein>
<feature type="signal peptide" evidence="1">
    <location>
        <begin position="1"/>
        <end position="29"/>
    </location>
</feature>
<feature type="chain" id="PRO_0000021526" description="Probable transglycosylase IsaA">
    <location>
        <begin position="30"/>
        <end position="233"/>
    </location>
</feature>
<reference key="1">
    <citation type="journal article" date="2001" name="Lancet">
        <title>Whole genome sequencing of meticillin-resistant Staphylococcus aureus.</title>
        <authorList>
            <person name="Kuroda M."/>
            <person name="Ohta T."/>
            <person name="Uchiyama I."/>
            <person name="Baba T."/>
            <person name="Yuzawa H."/>
            <person name="Kobayashi I."/>
            <person name="Cui L."/>
            <person name="Oguchi A."/>
            <person name="Aoki K."/>
            <person name="Nagai Y."/>
            <person name="Lian J.-Q."/>
            <person name="Ito T."/>
            <person name="Kanamori M."/>
            <person name="Matsumaru H."/>
            <person name="Maruyama A."/>
            <person name="Murakami H."/>
            <person name="Hosoyama A."/>
            <person name="Mizutani-Ui Y."/>
            <person name="Takahashi N.K."/>
            <person name="Sawano T."/>
            <person name="Inoue R."/>
            <person name="Kaito C."/>
            <person name="Sekimizu K."/>
            <person name="Hirakawa H."/>
            <person name="Kuhara S."/>
            <person name="Goto S."/>
            <person name="Yabuzaki J."/>
            <person name="Kanehisa M."/>
            <person name="Yamashita A."/>
            <person name="Oshima K."/>
            <person name="Furuya K."/>
            <person name="Yoshino C."/>
            <person name="Shiba T."/>
            <person name="Hattori M."/>
            <person name="Ogasawara N."/>
            <person name="Hayashi H."/>
            <person name="Hiramatsu K."/>
        </authorList>
    </citation>
    <scope>NUCLEOTIDE SEQUENCE [LARGE SCALE GENOMIC DNA]</scope>
    <source>
        <strain>Mu50 / ATCC 700699</strain>
    </source>
</reference>
<reference key="2">
    <citation type="journal article" date="2007" name="J. Proteome Res.">
        <title>Comparative proteomics analyses reveal a potential biomarker for the detection of vancomycin-intermediate Staphylococcus aureus strains.</title>
        <authorList>
            <person name="Drummelsmith J."/>
            <person name="Winstall E."/>
            <person name="Bergeron M.G."/>
            <person name="Poirier G.G."/>
            <person name="Ouellette M."/>
        </authorList>
    </citation>
    <scope>IDENTIFICATION BY MASS SPECTROMETRY</scope>
</reference>
<accession>P65645</accession>
<accession>Q99R69</accession>
<dbReference type="EC" id="3.2.-.-"/>
<dbReference type="EMBL" id="BA000017">
    <property type="protein sequence ID" value="BAB58731.1"/>
    <property type="molecule type" value="Genomic_DNA"/>
</dbReference>
<dbReference type="RefSeq" id="WP_000751263.1">
    <property type="nucleotide sequence ID" value="NC_002758.2"/>
</dbReference>
<dbReference type="SMR" id="P65645"/>
<dbReference type="KEGG" id="sav:SAV2569"/>
<dbReference type="HOGENOM" id="CLU_099865_0_0_9"/>
<dbReference type="Proteomes" id="UP000002481">
    <property type="component" value="Chromosome"/>
</dbReference>
<dbReference type="GO" id="GO:0005576">
    <property type="term" value="C:extracellular region"/>
    <property type="evidence" value="ECO:0007669"/>
    <property type="project" value="UniProtKB-SubCell"/>
</dbReference>
<dbReference type="GO" id="GO:0016798">
    <property type="term" value="F:hydrolase activity, acting on glycosyl bonds"/>
    <property type="evidence" value="ECO:0007669"/>
    <property type="project" value="UniProtKB-KW"/>
</dbReference>
<dbReference type="Gene3D" id="1.10.530.10">
    <property type="match status" value="1"/>
</dbReference>
<dbReference type="InterPro" id="IPR023346">
    <property type="entry name" value="Lysozyme-like_dom_sf"/>
</dbReference>
<dbReference type="InterPro" id="IPR008258">
    <property type="entry name" value="Transglycosylase_SLT_dom_1"/>
</dbReference>
<dbReference type="Pfam" id="PF01464">
    <property type="entry name" value="SLT"/>
    <property type="match status" value="1"/>
</dbReference>
<dbReference type="SUPFAM" id="SSF53955">
    <property type="entry name" value="Lysozyme-like"/>
    <property type="match status" value="1"/>
</dbReference>
<evidence type="ECO:0000250" key="1"/>
<evidence type="ECO:0000305" key="2"/>
<sequence length="233" mass="24204">MKKTIMASSLAVALGVTGYAAGTGHQAHAAEVNVDQAHLVDLAHNHQDQLNAAPIKDGAYDIHFVKDGFQYNFTSNGTTWSWSYEAANGQTAGFSNVAGADYTTSYNQGSDVQSVSYNAQSSNSNVEAVSAPTYHNYSTSTTSSSVRLSNGNTAGATGSSAAQIMAQRTGVSASTWAAIIARESNGQVNAYNPSGASGLFQTMPGWGPTNTVDQQINAAVKAYKAQGLGAWGF</sequence>
<name>ISAA_STAAM</name>
<gene>
    <name type="primary">isaA</name>
    <name type="ordered locus">SAV2569</name>
</gene>
<comment type="function">
    <text evidence="1">Is able to cleave peptidoglycan.</text>
</comment>
<comment type="subcellular location">
    <subcellularLocation>
        <location evidence="1">Secreted</location>
    </subcellularLocation>
</comment>
<comment type="similarity">
    <text evidence="2">Belongs to the transglycosylase family. IsaA subfamily.</text>
</comment>
<proteinExistence type="evidence at protein level"/>
<keyword id="KW-0326">Glycosidase</keyword>
<keyword id="KW-0378">Hydrolase</keyword>
<keyword id="KW-0964">Secreted</keyword>
<keyword id="KW-0732">Signal</keyword>